<feature type="chain" id="PRO_0000330129" description="Assembly factor CBP4">
    <location>
        <begin position="1"/>
        <end position="143"/>
    </location>
</feature>
<feature type="transmembrane region" description="Helical" evidence="2">
    <location>
        <begin position="5"/>
        <end position="27"/>
    </location>
</feature>
<feature type="coiled-coil region" evidence="2">
    <location>
        <begin position="99"/>
        <end position="131"/>
    </location>
</feature>
<protein>
    <recommendedName>
        <fullName>Assembly factor CBP4</fullName>
    </recommendedName>
    <alternativeName>
        <fullName>Cytochrome b mRNA-processing protein 4</fullName>
    </alternativeName>
</protein>
<name>CBP4_KLULA</name>
<dbReference type="EMBL" id="CR382126">
    <property type="protein sequence ID" value="CAG98472.1"/>
    <property type="molecule type" value="Genomic_DNA"/>
</dbReference>
<dbReference type="RefSeq" id="XP_455764.1">
    <property type="nucleotide sequence ID" value="XM_455764.1"/>
</dbReference>
<dbReference type="SMR" id="Q6CJX5"/>
<dbReference type="FunCoup" id="Q6CJX5">
    <property type="interactions" value="56"/>
</dbReference>
<dbReference type="STRING" id="284590.Q6CJX5"/>
<dbReference type="PaxDb" id="284590-Q6CJX5"/>
<dbReference type="KEGG" id="kla:KLLA0_F15246g"/>
<dbReference type="eggNOG" id="ENOG502S2G8">
    <property type="taxonomic scope" value="Eukaryota"/>
</dbReference>
<dbReference type="HOGENOM" id="CLU_147520_0_0_1"/>
<dbReference type="InParanoid" id="Q6CJX5"/>
<dbReference type="OMA" id="KDPIWKT"/>
<dbReference type="Proteomes" id="UP000000598">
    <property type="component" value="Chromosome F"/>
</dbReference>
<dbReference type="GO" id="GO:0005743">
    <property type="term" value="C:mitochondrial inner membrane"/>
    <property type="evidence" value="ECO:0007669"/>
    <property type="project" value="UniProtKB-SubCell"/>
</dbReference>
<dbReference type="GO" id="GO:0034551">
    <property type="term" value="P:mitochondrial respiratory chain complex III assembly"/>
    <property type="evidence" value="ECO:0007669"/>
    <property type="project" value="TreeGrafter"/>
</dbReference>
<dbReference type="InterPro" id="IPR012420">
    <property type="entry name" value="Cbp4"/>
</dbReference>
<dbReference type="PANTHER" id="PTHR28202">
    <property type="entry name" value="ASSEMBLY FACTOR CBP4"/>
    <property type="match status" value="1"/>
</dbReference>
<dbReference type="PANTHER" id="PTHR28202:SF1">
    <property type="entry name" value="ASSEMBLY FACTOR CBP4"/>
    <property type="match status" value="1"/>
</dbReference>
<dbReference type="Pfam" id="PF07960">
    <property type="entry name" value="CBP4"/>
    <property type="match status" value="1"/>
</dbReference>
<keyword id="KW-0143">Chaperone</keyword>
<keyword id="KW-0175">Coiled coil</keyword>
<keyword id="KW-0472">Membrane</keyword>
<keyword id="KW-0496">Mitochondrion</keyword>
<keyword id="KW-0999">Mitochondrion inner membrane</keyword>
<keyword id="KW-1185">Reference proteome</keyword>
<keyword id="KW-0812">Transmembrane</keyword>
<keyword id="KW-1133">Transmembrane helix</keyword>
<reference key="1">
    <citation type="journal article" date="2004" name="Nature">
        <title>Genome evolution in yeasts.</title>
        <authorList>
            <person name="Dujon B."/>
            <person name="Sherman D."/>
            <person name="Fischer G."/>
            <person name="Durrens P."/>
            <person name="Casaregola S."/>
            <person name="Lafontaine I."/>
            <person name="de Montigny J."/>
            <person name="Marck C."/>
            <person name="Neuveglise C."/>
            <person name="Talla E."/>
            <person name="Goffard N."/>
            <person name="Frangeul L."/>
            <person name="Aigle M."/>
            <person name="Anthouard V."/>
            <person name="Babour A."/>
            <person name="Barbe V."/>
            <person name="Barnay S."/>
            <person name="Blanchin S."/>
            <person name="Beckerich J.-M."/>
            <person name="Beyne E."/>
            <person name="Bleykasten C."/>
            <person name="Boisrame A."/>
            <person name="Boyer J."/>
            <person name="Cattolico L."/>
            <person name="Confanioleri F."/>
            <person name="de Daruvar A."/>
            <person name="Despons L."/>
            <person name="Fabre E."/>
            <person name="Fairhead C."/>
            <person name="Ferry-Dumazet H."/>
            <person name="Groppi A."/>
            <person name="Hantraye F."/>
            <person name="Hennequin C."/>
            <person name="Jauniaux N."/>
            <person name="Joyet P."/>
            <person name="Kachouri R."/>
            <person name="Kerrest A."/>
            <person name="Koszul R."/>
            <person name="Lemaire M."/>
            <person name="Lesur I."/>
            <person name="Ma L."/>
            <person name="Muller H."/>
            <person name="Nicaud J.-M."/>
            <person name="Nikolski M."/>
            <person name="Oztas S."/>
            <person name="Ozier-Kalogeropoulos O."/>
            <person name="Pellenz S."/>
            <person name="Potier S."/>
            <person name="Richard G.-F."/>
            <person name="Straub M.-L."/>
            <person name="Suleau A."/>
            <person name="Swennen D."/>
            <person name="Tekaia F."/>
            <person name="Wesolowski-Louvel M."/>
            <person name="Westhof E."/>
            <person name="Wirth B."/>
            <person name="Zeniou-Meyer M."/>
            <person name="Zivanovic Y."/>
            <person name="Bolotin-Fukuhara M."/>
            <person name="Thierry A."/>
            <person name="Bouchier C."/>
            <person name="Caudron B."/>
            <person name="Scarpelli C."/>
            <person name="Gaillardin C."/>
            <person name="Weissenbach J."/>
            <person name="Wincker P."/>
            <person name="Souciet J.-L."/>
        </authorList>
    </citation>
    <scope>NUCLEOTIDE SEQUENCE [LARGE SCALE GENOMIC DNA]</scope>
    <source>
        <strain>ATCC 8585 / CBS 2359 / DSM 70799 / NBRC 1267 / NRRL Y-1140 / WM37</strain>
    </source>
</reference>
<gene>
    <name type="primary">CBP4</name>
    <name type="ordered locus">KLLA0F15246g</name>
</gene>
<sequence length="143" mass="16835">MESSGFLRWGKVFAAGGSIILTGVLLFKYTTPTDEQLLQALSPELRLQYERERNLRQAEQQELMKVVQQTMKSKDPIWKTGTVDSPWERNGTQATKDQFQRLKADQVQKEELERIRQELDKIRMESLDQTDMIVSKKSWWSLW</sequence>
<proteinExistence type="inferred from homology"/>
<comment type="function">
    <text evidence="1">Essential for the assembly of ubiquinol-cytochrome c reductase. It has a direct effect on the correct occurrence of the Rieske protein, core 4, core 5 and apocytochrome b (By similarity).</text>
</comment>
<comment type="subcellular location">
    <subcellularLocation>
        <location evidence="1">Mitochondrion inner membrane</location>
        <topology evidence="1">Single-pass membrane protein</topology>
    </subcellularLocation>
</comment>
<comment type="similarity">
    <text evidence="3">Belongs to the CBP4 family.</text>
</comment>
<organism>
    <name type="scientific">Kluyveromyces lactis (strain ATCC 8585 / CBS 2359 / DSM 70799 / NBRC 1267 / NRRL Y-1140 / WM37)</name>
    <name type="common">Yeast</name>
    <name type="synonym">Candida sphaerica</name>
    <dbReference type="NCBI Taxonomy" id="284590"/>
    <lineage>
        <taxon>Eukaryota</taxon>
        <taxon>Fungi</taxon>
        <taxon>Dikarya</taxon>
        <taxon>Ascomycota</taxon>
        <taxon>Saccharomycotina</taxon>
        <taxon>Saccharomycetes</taxon>
        <taxon>Saccharomycetales</taxon>
        <taxon>Saccharomycetaceae</taxon>
        <taxon>Kluyveromyces</taxon>
    </lineage>
</organism>
<accession>Q6CJX5</accession>
<evidence type="ECO:0000250" key="1"/>
<evidence type="ECO:0000255" key="2"/>
<evidence type="ECO:0000305" key="3"/>